<organism>
    <name type="scientific">Fusarium sporotrichioides</name>
    <dbReference type="NCBI Taxonomy" id="5514"/>
    <lineage>
        <taxon>Eukaryota</taxon>
        <taxon>Fungi</taxon>
        <taxon>Dikarya</taxon>
        <taxon>Ascomycota</taxon>
        <taxon>Pezizomycotina</taxon>
        <taxon>Sordariomycetes</taxon>
        <taxon>Hypocreomycetidae</taxon>
        <taxon>Hypocreales</taxon>
        <taxon>Nectriaceae</taxon>
        <taxon>Fusarium</taxon>
    </lineage>
</organism>
<evidence type="ECO:0000269" key="1">
    <source>
    </source>
</evidence>
<evidence type="ECO:0000269" key="2">
    <source>
    </source>
</evidence>
<evidence type="ECO:0000269" key="3">
    <source>
    </source>
</evidence>
<evidence type="ECO:0000269" key="4">
    <source>
    </source>
</evidence>
<evidence type="ECO:0000269" key="5">
    <source>
    </source>
</evidence>
<evidence type="ECO:0000269" key="6">
    <source>
    </source>
</evidence>
<evidence type="ECO:0000269" key="7">
    <source>
    </source>
</evidence>
<evidence type="ECO:0000269" key="8">
    <source>
    </source>
</evidence>
<evidence type="ECO:0000269" key="9">
    <source>
    </source>
</evidence>
<evidence type="ECO:0000269" key="10">
    <source>
    </source>
</evidence>
<evidence type="ECO:0000269" key="11">
    <source>
    </source>
</evidence>
<evidence type="ECO:0000269" key="12">
    <source>
    </source>
</evidence>
<evidence type="ECO:0000269" key="13">
    <source>
    </source>
</evidence>
<evidence type="ECO:0000303" key="14">
    <source>
    </source>
</evidence>
<evidence type="ECO:0000305" key="15"/>
<proteinExistence type="evidence at transcript level"/>
<accession>Q9HEU0</accession>
<protein>
    <recommendedName>
        <fullName evidence="14">Core trichothecene cluster (CTC) protein 14</fullName>
    </recommendedName>
</protein>
<dbReference type="EMBL" id="AF326571">
    <property type="protein sequence ID" value="AAG46054.1"/>
    <property type="molecule type" value="Genomic_DNA"/>
</dbReference>
<dbReference type="EMBL" id="AY032746">
    <property type="protein sequence ID" value="AAK77936.1"/>
    <property type="molecule type" value="mRNA"/>
</dbReference>
<dbReference type="EMBL" id="AF359360">
    <property type="protein sequence ID" value="AAN40835.1"/>
    <property type="molecule type" value="Genomic_DNA"/>
</dbReference>
<dbReference type="SMR" id="Q9HEU0"/>
<dbReference type="CDD" id="cd12811">
    <property type="entry name" value="MALA"/>
    <property type="match status" value="1"/>
</dbReference>
<dbReference type="SUPFAM" id="SSF63829">
    <property type="entry name" value="Calcium-dependent phosphotriesterase"/>
    <property type="match status" value="1"/>
</dbReference>
<comment type="function">
    <text evidence="1 2 3 4 5 7 8 9 10 11 12 13">Part of the core gene cluster that mediates the biosynthesis of trichothecenes, a very large family of chemically related bicyclic sesquiterpene compounds acting as mycotoxins, including T2-toxin (PubMed:11352533). The biosynthesis of trichothecenes begins with the cyclization of farnesyl diphosphate to trichodiene and is catalyzed by the trichodiene synthase TRI5 (PubMed:3800398). Trichodiene undergoes a series of oxygenations catalyzed by the cytochrome P450 monooxygenase TRI4 (PubMed:7651333). TRI4 controls the addition of four oxygens at C-2, C-3, C-11, and the C-12, C-13-epoxide to form the intermediate isotrichotriol (PubMed:16917519). Isotrichotriol then undergoes a non-enzymatic isomerization and cyclization to form isotrichodermol (PubMed:2317042). During this process, the oxygen at the C-2 position becomes the pyran ring oxygen and the hydroxyl group at C-11 is lost (PubMed:2317042). More complex type A trichothecenes are built by modifying isotrichodermol through a series of paired hydroxylation and acetylation or acylation steps (PubMed:11352533). Isotrichodermol is converted to isotrichodermin by the acetyltransferase TRI101 (PubMed:10583973). TRI101 encodes a C-3 transacetylase that acts as a self-protection or resistance factor during biosynthesis and that the presence of a free C-3 hydroxyl group is a key component of Fusarium trichothecene phytotoxicity (PubMed:10583973). A second hydroxyl group is added to C-15 by the trichothecene C-15 hydroxylase TRI11, producing 15-decalonectrin, which is then acetylated by TRI3, producing calonectrin (PubMed:8593041, PubMed:9435078). A third hydroxyl group is added at C-4 by the cytochrome P450 monooxygenase TRI13, converting calonectrin to 3,15-diacetoxyspirpenol, which is subsequently acetylated bythe acetyltransferase TRI7 (PubMed:11352533, PubMed:12135578). A fourth hydroxyl group is added to C-8 by the cytochrome P450 monooxygenase TRI1, followed by the addition of an isovaleryl moiety by TRI16 (PubMed:12620849, PubMed:14532047). Finally, the acetyl group is removed from the C-3 position by the trichothecene C-3 esterase TRI8 to produce T-2 toxin (PubMed:12039755).</text>
</comment>
<comment type="induction">
    <text evidence="6">Expression is positively regulated by the trichothecene cluster-specific transcription activator TRI10 (PubMed:12732543).</text>
</comment>
<comment type="disruption phenotype">
    <text evidence="4">Does not affect the production of trichothecenes (PubMed:12135578).</text>
</comment>
<comment type="similarity">
    <text evidence="15">Belongs to the TRI14 family.</text>
</comment>
<feature type="chain" id="PRO_0000442373" description="Core trichothecene cluster (CTC) protein 14">
    <location>
        <begin position="1"/>
        <end position="373"/>
    </location>
</feature>
<name>TRI14_FUSSP</name>
<sequence length="373" mass="41271">MLPQVILNHLGSIGEAASTWFSENKYFGSVGQCPPLPKGDLNYDIYMGYPEMFAWDKKRCVAYVSNLYNATVSTWDPYKSVVLDTIHFPGLSHAGNSASPNPLHASGIILRPDAYHAETLEVVIDNGDAFYSDGFNVSGPDHLMSIDLKTKEVTSQLRLNNGLYAGYADASLGPDGNTYVLGTYSSNILRVTPDKEISTFYVAEPLGPPRLYGFTGIAHVGDAMIVPDNIIGQLIRFDVRDKVGTPVTIKQTPYHEFKTANVLHFPERYNDTILLVAENMTPDYPYGGVSVYQDKTKQFNEVEFLGFLPSRLTNALTTSARQMADRIYVVALPTDGANITVAGESSRFPFQDITEELDLMILPEIKDEARDEI</sequence>
<reference key="1">
    <citation type="journal article" date="2001" name="Fungal Genet. Biol.">
        <title>A genetic and biochemical approach to study trichothecene diversity in Fusarium sporotrichioides and Fusarium graminearum.</title>
        <authorList>
            <person name="Brown D.W."/>
            <person name="McCormick S.P."/>
            <person name="Alexander N.J."/>
            <person name="Proctor R.H."/>
            <person name="Desjardins A.E."/>
        </authorList>
    </citation>
    <scope>NUCLEOTIDE SEQUENCE [GENOMIC DNA]</scope>
    <source>
        <strain>ATCC 24631 / NRRL 3299</strain>
    </source>
</reference>
<reference key="2">
    <citation type="journal article" date="2003" name="Appl. Environ. Microbiol.">
        <title>Identification of new genes positively regulated by Tri10 and a regulatory network for trichothecene mycotoxin production.</title>
        <authorList>
            <person name="Peplow A.W."/>
            <person name="Tag A.G."/>
            <person name="Garifullina G.F."/>
            <person name="Beremand M.N."/>
        </authorList>
    </citation>
    <scope>NUCLEOTIDE SEQUENCE [GENOMIC DNA]</scope>
    <scope>IDENTIFICATION</scope>
    <scope>INDUCTION</scope>
    <source>
        <strain>ATCC 24631 / NRRL 3299</strain>
    </source>
</reference>
<reference key="3">
    <citation type="journal article" date="2002" name="Fungal Genet. Biol.">
        <title>Inactivation of a cytochrome P-450 is a determinant of trichothecene diversity in Fusarium species.</title>
        <authorList>
            <person name="Brown D.W."/>
            <person name="McCormick S.P."/>
            <person name="Alexander N.J."/>
            <person name="Proctor R.H."/>
            <person name="Desjardins A.E."/>
        </authorList>
    </citation>
    <scope>NUCLEOTIDE SEQUENCE [GENOMIC DNA]</scope>
    <scope>IDENTIFICATION</scope>
    <scope>FUNCTION</scope>
    <scope>DISRUPTION PHENOTYPE</scope>
</reference>
<reference key="4">
    <citation type="journal article" date="1986" name="Arch. Biochem. Biophys.">
        <title>Purification and characterization of the sesquiterpene cyclase trichodiene synthetase from Fusarium sporotrichioides.</title>
        <authorList>
            <person name="Hohn T.M."/>
            <person name="Vanmiddlesworth F."/>
        </authorList>
    </citation>
    <scope>FUNCTION</scope>
</reference>
<reference key="5">
    <citation type="journal article" date="1990" name="Appl. Environ. Microbiol.">
        <title>Bioconversion of possible T-2 toxin precursors by a mutant strain of Fusarium sporotrichioides NRRL 3299.</title>
        <authorList>
            <person name="McCormick S.P."/>
            <person name="Taylor S.L."/>
            <person name="Plattner R.D."/>
            <person name="Beremand M.N."/>
        </authorList>
    </citation>
    <scope>FUNCTION</scope>
</reference>
<reference key="6">
    <citation type="journal article" date="1995" name="Mol. Gen. Genet.">
        <title>The Tri4 gene of Fusarium sporotrichioides encodes a cytochrome P450 monooxygenase involved in trichothecene biosynthesis.</title>
        <authorList>
            <person name="Hohn T.M."/>
            <person name="Desjardins A.E."/>
            <person name="McCormick S.P."/>
        </authorList>
    </citation>
    <scope>FUNCTION</scope>
</reference>
<reference key="7">
    <citation type="journal article" date="1996" name="Appl. Environ. Microbiol.">
        <title>Isolation and characterization of Tri3, a gene encoding 15-O-acetyltransferase from Fusarium sporotrichioides.</title>
        <authorList>
            <person name="McCormick S.P."/>
            <person name="Hohn T.M."/>
            <person name="Desjardins A.E."/>
        </authorList>
    </citation>
    <scope>FUNCTION</scope>
</reference>
<reference key="8">
    <citation type="journal article" date="1998" name="Appl. Environ. Microbiol.">
        <title>The TRI11 gene of Fusarium sporotrichioides encodes a cytochrome P-450 monooxygenase required for C-15 hydroxylation in trichothecene biosynthesis.</title>
        <authorList>
            <person name="Alexander N.J."/>
            <person name="Hohn T.M."/>
            <person name="McCormick S.P."/>
        </authorList>
    </citation>
    <scope>FUNCTION</scope>
</reference>
<reference key="9">
    <citation type="journal article" date="1999" name="Appl. Environ. Microbiol.">
        <title>Disruption of TRI101, the gene encoding trichothecene 3-O-acetyltransferase, from Fusarium sporotrichioides.</title>
        <authorList>
            <person name="McCormick S.P."/>
            <person name="Alexander N.J."/>
            <person name="Trapp S.E."/>
            <person name="Hohn T.M."/>
        </authorList>
    </citation>
    <scope>FUNCTION</scope>
</reference>
<reference key="10">
    <citation type="journal article" date="2002" name="Appl. Environ. Microbiol.">
        <title>Fusarium Tri8 encodes a trichothecene C-3 esterase.</title>
        <authorList>
            <person name="McCormick S.P."/>
            <person name="Alexander N.J."/>
        </authorList>
    </citation>
    <scope>FUNCTION</scope>
</reference>
<reference key="11">
    <citation type="journal article" date="2003" name="Appl. Environ. Microbiol.">
        <title>Tri1 encodes the cytochrome P450 monooxygenase for C-8 hydroxylation during trichothecene biosynthesis in Fusarium sporotrichioides and resides upstream of another new Tri gene.</title>
        <authorList>
            <person name="Meek I.B."/>
            <person name="Peplow A.W."/>
            <person name="Ake C. Jr."/>
            <person name="Phillips T.D."/>
            <person name="Beremand M.N."/>
        </authorList>
    </citation>
    <scope>FUNCTION</scope>
</reference>
<reference key="12">
    <citation type="journal article" date="2003" name="Appl. Environ. Microbiol.">
        <title>Tri16 is required for esterification of position C-8 during trichothecene mycotoxin production by Fusarium sporotrichioides.</title>
        <authorList>
            <person name="Peplow A.W."/>
            <person name="Meek I.B."/>
            <person name="Wiles M.C."/>
            <person name="Phillips T.D."/>
            <person name="Beremand M.N."/>
        </authorList>
    </citation>
    <scope>FUNCTION</scope>
</reference>
<reference key="13">
    <citation type="journal article" date="2006" name="Can. J. Microbiol.">
        <title>Fusarium Tri4 encodes a multifunctional oxygenase required for trichothecene biosynthesis.</title>
        <authorList>
            <person name="McCormick S.P."/>
            <person name="Alexander N.J."/>
            <person name="Proctor R.H."/>
        </authorList>
    </citation>
    <scope>FUNCTION</scope>
</reference>
<gene>
    <name evidence="14" type="primary">TRI14</name>
</gene>